<name>AMPA_MYCPN</name>
<comment type="function">
    <text evidence="1">Presumably involved in the processing and regular turnover of intracellular proteins. Catalyzes the removal of unsubstituted N-terminal amino acids from various peptides (By similarity).</text>
</comment>
<comment type="catalytic activity">
    <reaction>
        <text>Release of an N-terminal amino acid, Xaa-|-Yaa-, in which Xaa is preferably Leu, but may be other amino acids including Pro although not Arg or Lys, and Yaa may be Pro. Amino acid amides and methyl esters are also readily hydrolyzed, but rates on arylamides are exceedingly low.</text>
        <dbReference type="EC" id="3.4.11.1"/>
    </reaction>
</comment>
<comment type="catalytic activity">
    <reaction>
        <text>Release of an N-terminal amino acid, preferentially leucine, but not glutamic or aspartic acids.</text>
        <dbReference type="EC" id="3.4.11.10"/>
    </reaction>
</comment>
<comment type="cofactor">
    <cofactor evidence="1">
        <name>Mn(2+)</name>
        <dbReference type="ChEBI" id="CHEBI:29035"/>
    </cofactor>
    <text evidence="1">Binds 2 manganese ions per subunit.</text>
</comment>
<comment type="subcellular location">
    <subcellularLocation>
        <location evidence="1">Cytoplasm</location>
    </subcellularLocation>
</comment>
<comment type="similarity">
    <text evidence="3">Belongs to the peptidase M17 family.</text>
</comment>
<protein>
    <recommendedName>
        <fullName>Probable cytosol aminopeptidase</fullName>
        <ecNumber>3.4.11.1</ecNumber>
    </recommendedName>
    <alternativeName>
        <fullName>Leucine aminopeptidase</fullName>
        <shortName>LAP</shortName>
        <ecNumber>3.4.11.10</ecNumber>
    </alternativeName>
    <alternativeName>
        <fullName>Leucyl aminopeptidase</fullName>
    </alternativeName>
</protein>
<accession>P75206</accession>
<sequence length="445" mass="48789">MKLNKLFDSKTVVFKKSDKYGKSDCCKTKCVEGQIEFGVKIPTDFPAFNRALVTFLKTQKNQLNVDLDSFVELYKAENLCYKTALKVVVASITFCETTPFTMKTEPQKNVEVAVKCDSEHTSLIKEYEVVGNYVNMARQLQDTPSDQLYPEEFVKRFEKAATGLGVKITVLKQADLIKKKMGLLLGVNKGSEREARLLVISYNNNKKSSETLALVGKGITYDSGGMNIKTGDYMRGMKYDMSGAAIVCSTVLALAKNKVKTNVVAVAALTENLPGPHAQRPDDIQTAYNGKTVEIDNTDAEGRLVLADAISYAAKDLKATQIIDVATLTGLMSYILSTTYTGIFSTCDMAWDAFKKAACCAGEPVWRLPMHPDYLKPLESKLADLQNSTSVKGAGSSRAACFLAEFREGVPLIHCDIASTASIQDLGQGVLVRTLYERAAQQAKE</sequence>
<organism>
    <name type="scientific">Mycoplasma pneumoniae (strain ATCC 29342 / M129 / Subtype 1)</name>
    <name type="common">Mycoplasmoides pneumoniae</name>
    <dbReference type="NCBI Taxonomy" id="272634"/>
    <lineage>
        <taxon>Bacteria</taxon>
        <taxon>Bacillati</taxon>
        <taxon>Mycoplasmatota</taxon>
        <taxon>Mycoplasmoidales</taxon>
        <taxon>Mycoplasmoidaceae</taxon>
        <taxon>Mycoplasmoides</taxon>
    </lineage>
</organism>
<dbReference type="EC" id="3.4.11.1"/>
<dbReference type="EC" id="3.4.11.10"/>
<dbReference type="EMBL" id="U00089">
    <property type="protein sequence ID" value="AAB95918.1"/>
    <property type="molecule type" value="Genomic_DNA"/>
</dbReference>
<dbReference type="PIR" id="S73596">
    <property type="entry name" value="S73596"/>
</dbReference>
<dbReference type="RefSeq" id="NP_110261.1">
    <property type="nucleotide sequence ID" value="NC_000912.1"/>
</dbReference>
<dbReference type="RefSeq" id="WP_010874929.1">
    <property type="nucleotide sequence ID" value="NZ_OU342337.1"/>
</dbReference>
<dbReference type="SMR" id="P75206"/>
<dbReference type="STRING" id="272634.MPN_572"/>
<dbReference type="EnsemblBacteria" id="AAB95918">
    <property type="protein sequence ID" value="AAB95918"/>
    <property type="gene ID" value="MPN_572"/>
</dbReference>
<dbReference type="KEGG" id="mpn:MPN_572"/>
<dbReference type="PATRIC" id="fig|272634.6.peg.634"/>
<dbReference type="HOGENOM" id="CLU_013734_6_3_14"/>
<dbReference type="OrthoDB" id="9809354at2"/>
<dbReference type="BioCyc" id="MPNE272634:G1GJ3-937-MONOMER"/>
<dbReference type="Proteomes" id="UP000000808">
    <property type="component" value="Chromosome"/>
</dbReference>
<dbReference type="GO" id="GO:0005737">
    <property type="term" value="C:cytoplasm"/>
    <property type="evidence" value="ECO:0007669"/>
    <property type="project" value="UniProtKB-SubCell"/>
</dbReference>
<dbReference type="GO" id="GO:0030145">
    <property type="term" value="F:manganese ion binding"/>
    <property type="evidence" value="ECO:0007669"/>
    <property type="project" value="UniProtKB-UniRule"/>
</dbReference>
<dbReference type="GO" id="GO:0070006">
    <property type="term" value="F:metalloaminopeptidase activity"/>
    <property type="evidence" value="ECO:0007669"/>
    <property type="project" value="InterPro"/>
</dbReference>
<dbReference type="GO" id="GO:0006508">
    <property type="term" value="P:proteolysis"/>
    <property type="evidence" value="ECO:0007669"/>
    <property type="project" value="UniProtKB-KW"/>
</dbReference>
<dbReference type="CDD" id="cd00433">
    <property type="entry name" value="Peptidase_M17"/>
    <property type="match status" value="1"/>
</dbReference>
<dbReference type="Gene3D" id="3.40.630.10">
    <property type="entry name" value="Zn peptidases"/>
    <property type="match status" value="1"/>
</dbReference>
<dbReference type="HAMAP" id="MF_00181">
    <property type="entry name" value="Cytosol_peptidase_M17"/>
    <property type="match status" value="1"/>
</dbReference>
<dbReference type="InterPro" id="IPR011356">
    <property type="entry name" value="Leucine_aapep/pepB"/>
</dbReference>
<dbReference type="InterPro" id="IPR000819">
    <property type="entry name" value="Peptidase_M17_C"/>
</dbReference>
<dbReference type="InterPro" id="IPR023042">
    <property type="entry name" value="Peptidase_M17_leu_NH2_pept"/>
</dbReference>
<dbReference type="NCBIfam" id="NF002080">
    <property type="entry name" value="PRK00913.3-2"/>
    <property type="match status" value="1"/>
</dbReference>
<dbReference type="PANTHER" id="PTHR11963:SF23">
    <property type="entry name" value="CYTOSOL AMINOPEPTIDASE"/>
    <property type="match status" value="1"/>
</dbReference>
<dbReference type="PANTHER" id="PTHR11963">
    <property type="entry name" value="LEUCINE AMINOPEPTIDASE-RELATED"/>
    <property type="match status" value="1"/>
</dbReference>
<dbReference type="Pfam" id="PF00883">
    <property type="entry name" value="Peptidase_M17"/>
    <property type="match status" value="1"/>
</dbReference>
<dbReference type="PRINTS" id="PR00481">
    <property type="entry name" value="LAMNOPPTDASE"/>
</dbReference>
<dbReference type="SUPFAM" id="SSF53187">
    <property type="entry name" value="Zn-dependent exopeptidases"/>
    <property type="match status" value="1"/>
</dbReference>
<dbReference type="PROSITE" id="PS00631">
    <property type="entry name" value="CYTOSOL_AP"/>
    <property type="match status" value="1"/>
</dbReference>
<gene>
    <name type="primary">pepA</name>
    <name type="ordered locus">MPN_572</name>
    <name type="ORF">MP270</name>
</gene>
<proteinExistence type="inferred from homology"/>
<feature type="chain" id="PRO_0000165768" description="Probable cytosol aminopeptidase">
    <location>
        <begin position="1"/>
        <end position="445"/>
    </location>
</feature>
<feature type="active site" evidence="2">
    <location>
        <position position="229"/>
    </location>
</feature>
<feature type="active site" evidence="2">
    <location>
        <position position="303"/>
    </location>
</feature>
<feature type="binding site" evidence="1">
    <location>
        <position position="217"/>
    </location>
    <ligand>
        <name>Mn(2+)</name>
        <dbReference type="ChEBI" id="CHEBI:29035"/>
        <label>2</label>
    </ligand>
</feature>
<feature type="binding site" evidence="1">
    <location>
        <position position="222"/>
    </location>
    <ligand>
        <name>Mn(2+)</name>
        <dbReference type="ChEBI" id="CHEBI:29035"/>
        <label>1</label>
    </ligand>
</feature>
<feature type="binding site" evidence="1">
    <location>
        <position position="222"/>
    </location>
    <ligand>
        <name>Mn(2+)</name>
        <dbReference type="ChEBI" id="CHEBI:29035"/>
        <label>2</label>
    </ligand>
</feature>
<feature type="binding site" evidence="1">
    <location>
        <position position="240"/>
    </location>
    <ligand>
        <name>Mn(2+)</name>
        <dbReference type="ChEBI" id="CHEBI:29035"/>
        <label>2</label>
    </ligand>
</feature>
<feature type="binding site" evidence="1">
    <location>
        <position position="299"/>
    </location>
    <ligand>
        <name>Mn(2+)</name>
        <dbReference type="ChEBI" id="CHEBI:29035"/>
        <label>1</label>
    </ligand>
</feature>
<feature type="binding site" evidence="1">
    <location>
        <position position="301"/>
    </location>
    <ligand>
        <name>Mn(2+)</name>
        <dbReference type="ChEBI" id="CHEBI:29035"/>
        <label>1</label>
    </ligand>
</feature>
<feature type="binding site" evidence="1">
    <location>
        <position position="301"/>
    </location>
    <ligand>
        <name>Mn(2+)</name>
        <dbReference type="ChEBI" id="CHEBI:29035"/>
        <label>2</label>
    </ligand>
</feature>
<keyword id="KW-0031">Aminopeptidase</keyword>
<keyword id="KW-0963">Cytoplasm</keyword>
<keyword id="KW-0378">Hydrolase</keyword>
<keyword id="KW-0464">Manganese</keyword>
<keyword id="KW-0479">Metal-binding</keyword>
<keyword id="KW-0645">Protease</keyword>
<keyword id="KW-1185">Reference proteome</keyword>
<evidence type="ECO:0000250" key="1"/>
<evidence type="ECO:0000255" key="2"/>
<evidence type="ECO:0000305" key="3"/>
<reference key="1">
    <citation type="journal article" date="1996" name="Nucleic Acids Res.">
        <title>Complete sequence analysis of the genome of the bacterium Mycoplasma pneumoniae.</title>
        <authorList>
            <person name="Himmelreich R."/>
            <person name="Hilbert H."/>
            <person name="Plagens H."/>
            <person name="Pirkl E."/>
            <person name="Li B.-C."/>
            <person name="Herrmann R."/>
        </authorList>
    </citation>
    <scope>NUCLEOTIDE SEQUENCE [LARGE SCALE GENOMIC DNA]</scope>
    <source>
        <strain>ATCC 29342 / M129 / Subtype 1</strain>
    </source>
</reference>